<dbReference type="EC" id="1.1.-.-"/>
<dbReference type="EMBL" id="AAAB01008960">
    <property type="protein sequence ID" value="EAA11852.3"/>
    <property type="molecule type" value="Genomic_DNA"/>
</dbReference>
<dbReference type="RefSeq" id="XP_315532.3">
    <property type="nucleotide sequence ID" value="XM_315532.3"/>
</dbReference>
<dbReference type="SMR" id="Q7Q732"/>
<dbReference type="FunCoup" id="Q7Q732">
    <property type="interactions" value="116"/>
</dbReference>
<dbReference type="STRING" id="7165.Q7Q732"/>
<dbReference type="PaxDb" id="7165-AGAP005532-PA"/>
<dbReference type="EnsemblMetazoa" id="AGAP005532-RA">
    <property type="protein sequence ID" value="AGAP005532-PA"/>
    <property type="gene ID" value="AGAP005532"/>
</dbReference>
<dbReference type="GeneID" id="1276215"/>
<dbReference type="KEGG" id="aga:1276215"/>
<dbReference type="VEuPathDB" id="VectorBase:AGAMI1_000583"/>
<dbReference type="VEuPathDB" id="VectorBase:AGAP005532"/>
<dbReference type="eggNOG" id="KOG1205">
    <property type="taxonomic scope" value="Eukaryota"/>
</dbReference>
<dbReference type="HOGENOM" id="CLU_010194_2_1_1"/>
<dbReference type="InParanoid" id="Q7Q732"/>
<dbReference type="OMA" id="YFWIMAK"/>
<dbReference type="PhylomeDB" id="Q7Q732"/>
<dbReference type="Proteomes" id="UP000007062">
    <property type="component" value="Chromosome 2L"/>
</dbReference>
<dbReference type="GO" id="GO:0016020">
    <property type="term" value="C:membrane"/>
    <property type="evidence" value="ECO:0000318"/>
    <property type="project" value="GO_Central"/>
</dbReference>
<dbReference type="GO" id="GO:0005778">
    <property type="term" value="C:peroxisomal membrane"/>
    <property type="evidence" value="ECO:0007669"/>
    <property type="project" value="UniProtKB-SubCell"/>
</dbReference>
<dbReference type="GO" id="GO:0016491">
    <property type="term" value="F:oxidoreductase activity"/>
    <property type="evidence" value="ECO:0007669"/>
    <property type="project" value="UniProtKB-KW"/>
</dbReference>
<dbReference type="CDD" id="cd05332">
    <property type="entry name" value="11beta-HSD1_like_SDR_c"/>
    <property type="match status" value="1"/>
</dbReference>
<dbReference type="Gene3D" id="3.40.50.720">
    <property type="entry name" value="NAD(P)-binding Rossmann-like Domain"/>
    <property type="match status" value="1"/>
</dbReference>
<dbReference type="InterPro" id="IPR036291">
    <property type="entry name" value="NAD(P)-bd_dom_sf"/>
</dbReference>
<dbReference type="InterPro" id="IPR020904">
    <property type="entry name" value="Sc_DH/Rdtase_CS"/>
</dbReference>
<dbReference type="InterPro" id="IPR002347">
    <property type="entry name" value="SDR_fam"/>
</dbReference>
<dbReference type="NCBIfam" id="NF004825">
    <property type="entry name" value="PRK06181.1"/>
    <property type="match status" value="1"/>
</dbReference>
<dbReference type="PANTHER" id="PTHR44196">
    <property type="entry name" value="DEHYDROGENASE/REDUCTASE SDR FAMILY MEMBER 7B"/>
    <property type="match status" value="1"/>
</dbReference>
<dbReference type="PANTHER" id="PTHR44196:SF1">
    <property type="entry name" value="DEHYDROGENASE_REDUCTASE SDR FAMILY MEMBER 7B"/>
    <property type="match status" value="1"/>
</dbReference>
<dbReference type="Pfam" id="PF00106">
    <property type="entry name" value="adh_short"/>
    <property type="match status" value="1"/>
</dbReference>
<dbReference type="PIRSF" id="PIRSF000126">
    <property type="entry name" value="11-beta-HSD1"/>
    <property type="match status" value="1"/>
</dbReference>
<dbReference type="PRINTS" id="PR00081">
    <property type="entry name" value="GDHRDH"/>
</dbReference>
<dbReference type="PRINTS" id="PR00080">
    <property type="entry name" value="SDRFAMILY"/>
</dbReference>
<dbReference type="SUPFAM" id="SSF51735">
    <property type="entry name" value="NAD(P)-binding Rossmann-fold domains"/>
    <property type="match status" value="1"/>
</dbReference>
<dbReference type="PROSITE" id="PS00061">
    <property type="entry name" value="ADH_SHORT"/>
    <property type="match status" value="1"/>
</dbReference>
<protein>
    <recommendedName>
        <fullName>Dehydrogenase/reductase SDR family protein 7-like</fullName>
        <ecNumber>1.1.-.-</ecNumber>
    </recommendedName>
</protein>
<name>DHRS7_ANOGA</name>
<comment type="function">
    <text evidence="4">Putative oxidoreductase.</text>
</comment>
<comment type="subcellular location">
    <subcellularLocation>
        <location evidence="4">Peroxisome membrane</location>
        <topology evidence="4">Single-pass type II membrane protein</topology>
    </subcellularLocation>
</comment>
<comment type="similarity">
    <text evidence="4">Belongs to the short-chain dehydrogenases/reductases (SDR) family.</text>
</comment>
<sequence>MKNLAERSAGSLYWWLLATLFLPIAIPGLVLKLLTMMKEQRNARHLNGKVVLITGASSGLGEALAHSFFLAGCKVVLAARRKDELERVRKDLLELHATVPTHPPIILPLDLSDLNSIGGKVQSVLEIHGAIDILVNNGGISVRGDALSTAIDVDIRIMLVNYFGSVALTKACLPSMMARKEGRIVSISSVQGKFAIPHRSAYSASKHAMQAFCDSLRAEVAKDNIKVTLISPGYINTALSLNALTGTGASYGKMDAATAGGASPQDTASSILKAIARDEKDVMLAPIAPRAAYWLRHLAPSVYFWIMKKRAEKLNST</sequence>
<proteinExistence type="inferred from homology"/>
<organism>
    <name type="scientific">Anopheles gambiae</name>
    <name type="common">African malaria mosquito</name>
    <dbReference type="NCBI Taxonomy" id="7165"/>
    <lineage>
        <taxon>Eukaryota</taxon>
        <taxon>Metazoa</taxon>
        <taxon>Ecdysozoa</taxon>
        <taxon>Arthropoda</taxon>
        <taxon>Hexapoda</taxon>
        <taxon>Insecta</taxon>
        <taxon>Pterygota</taxon>
        <taxon>Neoptera</taxon>
        <taxon>Endopterygota</taxon>
        <taxon>Diptera</taxon>
        <taxon>Nematocera</taxon>
        <taxon>Culicoidea</taxon>
        <taxon>Culicidae</taxon>
        <taxon>Anophelinae</taxon>
        <taxon>Anopheles</taxon>
    </lineage>
</organism>
<gene>
    <name type="ORF">AGAP005532</name>
</gene>
<feature type="chain" id="PRO_0000312112" description="Dehydrogenase/reductase SDR family protein 7-like">
    <location>
        <begin position="1"/>
        <end position="317"/>
    </location>
</feature>
<feature type="topological domain" description="Cytoplasmic" evidence="2">
    <location>
        <begin position="1"/>
        <end position="10"/>
    </location>
</feature>
<feature type="transmembrane region" description="Helical; Signal-anchor for type II membrane protein" evidence="2">
    <location>
        <begin position="11"/>
        <end position="31"/>
    </location>
</feature>
<feature type="topological domain" description="Peroxisomal" evidence="2">
    <location>
        <begin position="32"/>
        <end position="317"/>
    </location>
</feature>
<feature type="active site" description="Proton acceptor" evidence="3">
    <location>
        <position position="202"/>
    </location>
</feature>
<feature type="binding site" evidence="1">
    <location>
        <begin position="52"/>
        <end position="76"/>
    </location>
    <ligand>
        <name>NAD(+)</name>
        <dbReference type="ChEBI" id="CHEBI:57540"/>
    </ligand>
</feature>
<feature type="binding site" evidence="2">
    <location>
        <position position="189"/>
    </location>
    <ligand>
        <name>substrate</name>
    </ligand>
</feature>
<evidence type="ECO:0000250" key="1"/>
<evidence type="ECO:0000255" key="2"/>
<evidence type="ECO:0000255" key="3">
    <source>
        <dbReference type="PROSITE-ProRule" id="PRU10001"/>
    </source>
</evidence>
<evidence type="ECO:0000305" key="4"/>
<keyword id="KW-0472">Membrane</keyword>
<keyword id="KW-0520">NAD</keyword>
<keyword id="KW-0521">NADP</keyword>
<keyword id="KW-0560">Oxidoreductase</keyword>
<keyword id="KW-0576">Peroxisome</keyword>
<keyword id="KW-1185">Reference proteome</keyword>
<keyword id="KW-0735">Signal-anchor</keyword>
<keyword id="KW-0812">Transmembrane</keyword>
<keyword id="KW-1133">Transmembrane helix</keyword>
<reference key="1">
    <citation type="journal article" date="2002" name="Science">
        <title>The genome sequence of the malaria mosquito Anopheles gambiae.</title>
        <authorList>
            <person name="Holt R.A."/>
            <person name="Subramanian G.M."/>
            <person name="Halpern A."/>
            <person name="Sutton G.G."/>
            <person name="Charlab R."/>
            <person name="Nusskern D.R."/>
            <person name="Wincker P."/>
            <person name="Clark A.G."/>
            <person name="Ribeiro J.M.C."/>
            <person name="Wides R."/>
            <person name="Salzberg S.L."/>
            <person name="Loftus B.J."/>
            <person name="Yandell M.D."/>
            <person name="Majoros W.H."/>
            <person name="Rusch D.B."/>
            <person name="Lai Z."/>
            <person name="Kraft C.L."/>
            <person name="Abril J.F."/>
            <person name="Anthouard V."/>
            <person name="Arensburger P."/>
            <person name="Atkinson P.W."/>
            <person name="Baden H."/>
            <person name="de Berardinis V."/>
            <person name="Baldwin D."/>
            <person name="Benes V."/>
            <person name="Biedler J."/>
            <person name="Blass C."/>
            <person name="Bolanos R."/>
            <person name="Boscus D."/>
            <person name="Barnstead M."/>
            <person name="Cai S."/>
            <person name="Center A."/>
            <person name="Chaturverdi K."/>
            <person name="Christophides G.K."/>
            <person name="Chrystal M.A.M."/>
            <person name="Clamp M."/>
            <person name="Cravchik A."/>
            <person name="Curwen V."/>
            <person name="Dana A."/>
            <person name="Delcher A."/>
            <person name="Dew I."/>
            <person name="Evans C.A."/>
            <person name="Flanigan M."/>
            <person name="Grundschober-Freimoser A."/>
            <person name="Friedli L."/>
            <person name="Gu Z."/>
            <person name="Guan P."/>
            <person name="Guigo R."/>
            <person name="Hillenmeyer M.E."/>
            <person name="Hladun S.L."/>
            <person name="Hogan J.R."/>
            <person name="Hong Y.S."/>
            <person name="Hoover J."/>
            <person name="Jaillon O."/>
            <person name="Ke Z."/>
            <person name="Kodira C.D."/>
            <person name="Kokoza E."/>
            <person name="Koutsos A."/>
            <person name="Letunic I."/>
            <person name="Levitsky A.A."/>
            <person name="Liang Y."/>
            <person name="Lin J.-J."/>
            <person name="Lobo N.F."/>
            <person name="Lopez J.R."/>
            <person name="Malek J.A."/>
            <person name="McIntosh T.C."/>
            <person name="Meister S."/>
            <person name="Miller J.R."/>
            <person name="Mobarry C."/>
            <person name="Mongin E."/>
            <person name="Murphy S.D."/>
            <person name="O'Brochta D.A."/>
            <person name="Pfannkoch C."/>
            <person name="Qi R."/>
            <person name="Regier M.A."/>
            <person name="Remington K."/>
            <person name="Shao H."/>
            <person name="Sharakhova M.V."/>
            <person name="Sitter C.D."/>
            <person name="Shetty J."/>
            <person name="Smith T.J."/>
            <person name="Strong R."/>
            <person name="Sun J."/>
            <person name="Thomasova D."/>
            <person name="Ton L.Q."/>
            <person name="Topalis P."/>
            <person name="Tu Z.J."/>
            <person name="Unger M.F."/>
            <person name="Walenz B."/>
            <person name="Wang A.H."/>
            <person name="Wang J."/>
            <person name="Wang M."/>
            <person name="Wang X."/>
            <person name="Woodford K.J."/>
            <person name="Wortman J.R."/>
            <person name="Wu M."/>
            <person name="Yao A."/>
            <person name="Zdobnov E.M."/>
            <person name="Zhang H."/>
            <person name="Zhao Q."/>
            <person name="Zhao S."/>
            <person name="Zhu S.C."/>
            <person name="Zhimulev I."/>
            <person name="Coluzzi M."/>
            <person name="della Torre A."/>
            <person name="Roth C.W."/>
            <person name="Louis C."/>
            <person name="Kalush F."/>
            <person name="Mural R.J."/>
            <person name="Myers E.W."/>
            <person name="Adams M.D."/>
            <person name="Smith H.O."/>
            <person name="Broder S."/>
            <person name="Gardner M.J."/>
            <person name="Fraser C.M."/>
            <person name="Birney E."/>
            <person name="Bork P."/>
            <person name="Brey P.T."/>
            <person name="Venter J.C."/>
            <person name="Weissenbach J."/>
            <person name="Kafatos F.C."/>
            <person name="Collins F.H."/>
            <person name="Hoffman S.L."/>
        </authorList>
    </citation>
    <scope>NUCLEOTIDE SEQUENCE [LARGE SCALE GENOMIC DNA]</scope>
    <source>
        <strain>PEST</strain>
    </source>
</reference>
<accession>Q7Q732</accession>